<reference key="1">
    <citation type="submission" date="2007-10" db="EMBL/GenBank/DDBJ databases">
        <title>Complete sequence of Shewanella pealeana ATCC 700345.</title>
        <authorList>
            <consortium name="US DOE Joint Genome Institute"/>
            <person name="Copeland A."/>
            <person name="Lucas S."/>
            <person name="Lapidus A."/>
            <person name="Barry K."/>
            <person name="Glavina del Rio T."/>
            <person name="Dalin E."/>
            <person name="Tice H."/>
            <person name="Pitluck S."/>
            <person name="Chertkov O."/>
            <person name="Brettin T."/>
            <person name="Bruce D."/>
            <person name="Detter J.C."/>
            <person name="Han C."/>
            <person name="Schmutz J."/>
            <person name="Larimer F."/>
            <person name="Land M."/>
            <person name="Hauser L."/>
            <person name="Kyrpides N."/>
            <person name="Kim E."/>
            <person name="Zhao J.-S.Z."/>
            <person name="Manno D."/>
            <person name="Hawari J."/>
            <person name="Richardson P."/>
        </authorList>
    </citation>
    <scope>NUCLEOTIDE SEQUENCE [LARGE SCALE GENOMIC DNA]</scope>
    <source>
        <strain>ATCC 700345 / ANG-SQ1</strain>
    </source>
</reference>
<feature type="chain" id="PRO_1000076020" description="S-adenosylmethionine:tRNA ribosyltransferase-isomerase">
    <location>
        <begin position="1"/>
        <end position="345"/>
    </location>
</feature>
<comment type="function">
    <text evidence="1">Transfers and isomerizes the ribose moiety from AdoMet to the 7-aminomethyl group of 7-deazaguanine (preQ1-tRNA) to give epoxyqueuosine (oQ-tRNA).</text>
</comment>
<comment type="catalytic activity">
    <reaction evidence="1">
        <text>7-aminomethyl-7-carbaguanosine(34) in tRNA + S-adenosyl-L-methionine = epoxyqueuosine(34) in tRNA + adenine + L-methionine + 2 H(+)</text>
        <dbReference type="Rhea" id="RHEA:32155"/>
        <dbReference type="Rhea" id="RHEA-COMP:10342"/>
        <dbReference type="Rhea" id="RHEA-COMP:18582"/>
        <dbReference type="ChEBI" id="CHEBI:15378"/>
        <dbReference type="ChEBI" id="CHEBI:16708"/>
        <dbReference type="ChEBI" id="CHEBI:57844"/>
        <dbReference type="ChEBI" id="CHEBI:59789"/>
        <dbReference type="ChEBI" id="CHEBI:82833"/>
        <dbReference type="ChEBI" id="CHEBI:194443"/>
        <dbReference type="EC" id="2.4.99.17"/>
    </reaction>
</comment>
<comment type="pathway">
    <text evidence="1">tRNA modification; tRNA-queuosine biosynthesis.</text>
</comment>
<comment type="subunit">
    <text evidence="1">Monomer.</text>
</comment>
<comment type="subcellular location">
    <subcellularLocation>
        <location evidence="1">Cytoplasm</location>
    </subcellularLocation>
</comment>
<comment type="similarity">
    <text evidence="1">Belongs to the QueA family.</text>
</comment>
<accession>A8H2K7</accession>
<organism>
    <name type="scientific">Shewanella pealeana (strain ATCC 700345 / ANG-SQ1)</name>
    <dbReference type="NCBI Taxonomy" id="398579"/>
    <lineage>
        <taxon>Bacteria</taxon>
        <taxon>Pseudomonadati</taxon>
        <taxon>Pseudomonadota</taxon>
        <taxon>Gammaproteobacteria</taxon>
        <taxon>Alteromonadales</taxon>
        <taxon>Shewanellaceae</taxon>
        <taxon>Shewanella</taxon>
    </lineage>
</organism>
<dbReference type="EC" id="2.4.99.17" evidence="1"/>
<dbReference type="EMBL" id="CP000851">
    <property type="protein sequence ID" value="ABV86794.1"/>
    <property type="molecule type" value="Genomic_DNA"/>
</dbReference>
<dbReference type="RefSeq" id="WP_012154720.1">
    <property type="nucleotide sequence ID" value="NC_009901.1"/>
</dbReference>
<dbReference type="SMR" id="A8H2K7"/>
<dbReference type="STRING" id="398579.Spea_1469"/>
<dbReference type="KEGG" id="spl:Spea_1469"/>
<dbReference type="eggNOG" id="COG0809">
    <property type="taxonomic scope" value="Bacteria"/>
</dbReference>
<dbReference type="HOGENOM" id="CLU_039110_1_0_6"/>
<dbReference type="OrthoDB" id="9805933at2"/>
<dbReference type="UniPathway" id="UPA00392"/>
<dbReference type="Proteomes" id="UP000002608">
    <property type="component" value="Chromosome"/>
</dbReference>
<dbReference type="GO" id="GO:0005737">
    <property type="term" value="C:cytoplasm"/>
    <property type="evidence" value="ECO:0007669"/>
    <property type="project" value="UniProtKB-SubCell"/>
</dbReference>
<dbReference type="GO" id="GO:0051075">
    <property type="term" value="F:S-adenosylmethionine:tRNA ribosyltransferase-isomerase activity"/>
    <property type="evidence" value="ECO:0007669"/>
    <property type="project" value="UniProtKB-EC"/>
</dbReference>
<dbReference type="GO" id="GO:0008616">
    <property type="term" value="P:queuosine biosynthetic process"/>
    <property type="evidence" value="ECO:0007669"/>
    <property type="project" value="UniProtKB-UniRule"/>
</dbReference>
<dbReference type="GO" id="GO:0002099">
    <property type="term" value="P:tRNA wobble guanine modification"/>
    <property type="evidence" value="ECO:0007669"/>
    <property type="project" value="TreeGrafter"/>
</dbReference>
<dbReference type="FunFam" id="2.40.10.240:FF:000001">
    <property type="entry name" value="S-adenosylmethionine:tRNA ribosyltransferase-isomerase"/>
    <property type="match status" value="1"/>
</dbReference>
<dbReference type="FunFam" id="3.40.1780.10:FF:000001">
    <property type="entry name" value="S-adenosylmethionine:tRNA ribosyltransferase-isomerase"/>
    <property type="match status" value="1"/>
</dbReference>
<dbReference type="Gene3D" id="2.40.10.240">
    <property type="entry name" value="QueA-like"/>
    <property type="match status" value="1"/>
</dbReference>
<dbReference type="Gene3D" id="3.40.1780.10">
    <property type="entry name" value="QueA-like"/>
    <property type="match status" value="1"/>
</dbReference>
<dbReference type="HAMAP" id="MF_00113">
    <property type="entry name" value="QueA"/>
    <property type="match status" value="1"/>
</dbReference>
<dbReference type="InterPro" id="IPR003699">
    <property type="entry name" value="QueA"/>
</dbReference>
<dbReference type="InterPro" id="IPR042118">
    <property type="entry name" value="QueA_dom1"/>
</dbReference>
<dbReference type="InterPro" id="IPR042119">
    <property type="entry name" value="QueA_dom2"/>
</dbReference>
<dbReference type="InterPro" id="IPR036100">
    <property type="entry name" value="QueA_sf"/>
</dbReference>
<dbReference type="NCBIfam" id="NF001140">
    <property type="entry name" value="PRK00147.1"/>
    <property type="match status" value="1"/>
</dbReference>
<dbReference type="NCBIfam" id="TIGR00113">
    <property type="entry name" value="queA"/>
    <property type="match status" value="1"/>
</dbReference>
<dbReference type="PANTHER" id="PTHR30307">
    <property type="entry name" value="S-ADENOSYLMETHIONINE:TRNA RIBOSYLTRANSFERASE-ISOMERASE"/>
    <property type="match status" value="1"/>
</dbReference>
<dbReference type="PANTHER" id="PTHR30307:SF0">
    <property type="entry name" value="S-ADENOSYLMETHIONINE:TRNA RIBOSYLTRANSFERASE-ISOMERASE"/>
    <property type="match status" value="1"/>
</dbReference>
<dbReference type="Pfam" id="PF02547">
    <property type="entry name" value="Queuosine_synth"/>
    <property type="match status" value="1"/>
</dbReference>
<dbReference type="SUPFAM" id="SSF111337">
    <property type="entry name" value="QueA-like"/>
    <property type="match status" value="1"/>
</dbReference>
<protein>
    <recommendedName>
        <fullName evidence="1">S-adenosylmethionine:tRNA ribosyltransferase-isomerase</fullName>
        <ecNumber evidence="1">2.4.99.17</ecNumber>
    </recommendedName>
    <alternativeName>
        <fullName evidence="1">Queuosine biosynthesis protein QueA</fullName>
    </alternativeName>
</protein>
<keyword id="KW-0963">Cytoplasm</keyword>
<keyword id="KW-0671">Queuosine biosynthesis</keyword>
<keyword id="KW-1185">Reference proteome</keyword>
<keyword id="KW-0949">S-adenosyl-L-methionine</keyword>
<keyword id="KW-0808">Transferase</keyword>
<evidence type="ECO:0000255" key="1">
    <source>
        <dbReference type="HAMAP-Rule" id="MF_00113"/>
    </source>
</evidence>
<gene>
    <name evidence="1" type="primary">queA</name>
    <name type="ordered locus">Spea_1469</name>
</gene>
<proteinExistence type="inferred from homology"/>
<sequence>MRVADYSFELPDELIARYPTAERTASRLLSLDGNSGQLADLQFTDILEQVNPGDLMVFNNTRVIPARMFGTKQSGGKLEILVERMLDDKRVLAHVRCSKSPKVDSIVCLDGGYEMVMLARHDALFELSLQSDKTILEVLEEVGHMPLPPYIDRPDEDADKERYQTVYNQNPGAVAAPTAGLHFDDAILAALKAKGVNTAFVTLHVGAGTFQPVRVDNILDHKMHSEWAEVPQTVVDLIGETKARGNRVIAVGTTSVRSLESAAKASQGVLQSFSGDTDIFIYPGYQFQVVDAMVTNFHLPESTLIMLLSAFAGFDEVKNAYQHAIAQKYRFFSYGDAMFVTKKAN</sequence>
<name>QUEA_SHEPA</name>